<protein>
    <recommendedName>
        <fullName evidence="2">Type VII secretion system extracellular protein B</fullName>
        <shortName evidence="2">Ess extracellular protein B</shortName>
    </recommendedName>
</protein>
<feature type="chain" id="PRO_0000167831" description="Type VII secretion system extracellular protein B">
    <location>
        <begin position="1"/>
        <end position="104"/>
    </location>
</feature>
<keyword id="KW-0964">Secreted</keyword>
<keyword id="KW-0843">Virulence</keyword>
<evidence type="ECO:0000250" key="1">
    <source>
        <dbReference type="UniProtKB" id="A0A0H2XIE9"/>
    </source>
</evidence>
<evidence type="ECO:0000250" key="2">
    <source>
        <dbReference type="UniProtKB" id="P0C047"/>
    </source>
</evidence>
<evidence type="ECO:0000250" key="3">
    <source>
        <dbReference type="UniProtKB" id="Q2G182"/>
    </source>
</evidence>
<evidence type="ECO:0000305" key="4"/>
<name>ESXB_STAAM</name>
<proteinExistence type="inferred from homology"/>
<comment type="function">
    <text evidence="1 2">Virulence factor that is important for the establishment of infection in the host. EsxB is required for EsxA synthesis as well as secretion (By similarity). Mediates together with EsxA the release of S.aureus from the host cell. Also inhibits host cytokine production and thus modulates dendritic cell-mediated immunity (By similarity).</text>
</comment>
<comment type="subunit">
    <text evidence="3">Homodimer. When mixed with EsxA does not form heterodimers.</text>
</comment>
<comment type="subcellular location">
    <subcellularLocation>
        <location evidence="2">Secreted</location>
    </subcellularLocation>
    <text evidence="2">Secreted via the ESAT-6 secretion system (Ess) / type VII secretion system (T7SS).</text>
</comment>
<comment type="similarity">
    <text evidence="4">Belongs to the WXG100 family.</text>
</comment>
<gene>
    <name evidence="2" type="primary">esxB</name>
    <name type="ordered locus">SAV0290</name>
</gene>
<dbReference type="EMBL" id="BA000017">
    <property type="protein sequence ID" value="BAB56452.1"/>
    <property type="molecule type" value="Genomic_DNA"/>
</dbReference>
<dbReference type="RefSeq" id="WP_000509671.1">
    <property type="nucleotide sequence ID" value="NC_002758.2"/>
</dbReference>
<dbReference type="SMR" id="Q99WT7"/>
<dbReference type="KEGG" id="sav:SAV0290"/>
<dbReference type="HOGENOM" id="CLU_2248426_0_0_9"/>
<dbReference type="Proteomes" id="UP000002481">
    <property type="component" value="Chromosome"/>
</dbReference>
<dbReference type="GO" id="GO:0005576">
    <property type="term" value="C:extracellular region"/>
    <property type="evidence" value="ECO:0007669"/>
    <property type="project" value="UniProtKB-SubCell"/>
</dbReference>
<dbReference type="InterPro" id="IPR036689">
    <property type="entry name" value="ESAT-6-like_sf"/>
</dbReference>
<dbReference type="InterPro" id="IPR010310">
    <property type="entry name" value="T7SS_ESAT-6-like"/>
</dbReference>
<dbReference type="Pfam" id="PF06013">
    <property type="entry name" value="WXG100"/>
    <property type="match status" value="1"/>
</dbReference>
<dbReference type="SUPFAM" id="SSF140453">
    <property type="entry name" value="EsxAB dimer-like"/>
    <property type="match status" value="1"/>
</dbReference>
<sequence>MGGYKGIKADGGKVNQAKQLAAKIAKDIEACQKQTQQLAEYIEGSDWEGQFANKVKDVLLIMAKFQEELVQPMADHQKAIDNLSQNLAKYDTLSIKQGLDRVNP</sequence>
<accession>Q99WT7</accession>
<reference key="1">
    <citation type="journal article" date="2001" name="Lancet">
        <title>Whole genome sequencing of meticillin-resistant Staphylococcus aureus.</title>
        <authorList>
            <person name="Kuroda M."/>
            <person name="Ohta T."/>
            <person name="Uchiyama I."/>
            <person name="Baba T."/>
            <person name="Yuzawa H."/>
            <person name="Kobayashi I."/>
            <person name="Cui L."/>
            <person name="Oguchi A."/>
            <person name="Aoki K."/>
            <person name="Nagai Y."/>
            <person name="Lian J.-Q."/>
            <person name="Ito T."/>
            <person name="Kanamori M."/>
            <person name="Matsumaru H."/>
            <person name="Maruyama A."/>
            <person name="Murakami H."/>
            <person name="Hosoyama A."/>
            <person name="Mizutani-Ui Y."/>
            <person name="Takahashi N.K."/>
            <person name="Sawano T."/>
            <person name="Inoue R."/>
            <person name="Kaito C."/>
            <person name="Sekimizu K."/>
            <person name="Hirakawa H."/>
            <person name="Kuhara S."/>
            <person name="Goto S."/>
            <person name="Yabuzaki J."/>
            <person name="Kanehisa M."/>
            <person name="Yamashita A."/>
            <person name="Oshima K."/>
            <person name="Furuya K."/>
            <person name="Yoshino C."/>
            <person name="Shiba T."/>
            <person name="Hattori M."/>
            <person name="Ogasawara N."/>
            <person name="Hayashi H."/>
            <person name="Hiramatsu K."/>
        </authorList>
    </citation>
    <scope>NUCLEOTIDE SEQUENCE [LARGE SCALE GENOMIC DNA]</scope>
    <source>
        <strain>Mu50 / ATCC 700699</strain>
    </source>
</reference>
<organism>
    <name type="scientific">Staphylococcus aureus (strain Mu50 / ATCC 700699)</name>
    <dbReference type="NCBI Taxonomy" id="158878"/>
    <lineage>
        <taxon>Bacteria</taxon>
        <taxon>Bacillati</taxon>
        <taxon>Bacillota</taxon>
        <taxon>Bacilli</taxon>
        <taxon>Bacillales</taxon>
        <taxon>Staphylococcaceae</taxon>
        <taxon>Staphylococcus</taxon>
    </lineage>
</organism>